<comment type="function">
    <text evidence="1">Polymerase that creates the 3'-poly(A) tail of mRNA's. May acquire specificity through interaction with a cleavage and polyadenylation factor (By similarity).</text>
</comment>
<comment type="catalytic activity">
    <reaction>
        <text>RNA(n) + ATP = RNA(n)-3'-adenine ribonucleotide + diphosphate</text>
        <dbReference type="Rhea" id="RHEA:11332"/>
        <dbReference type="Rhea" id="RHEA-COMP:14527"/>
        <dbReference type="Rhea" id="RHEA-COMP:17347"/>
        <dbReference type="ChEBI" id="CHEBI:30616"/>
        <dbReference type="ChEBI" id="CHEBI:33019"/>
        <dbReference type="ChEBI" id="CHEBI:140395"/>
        <dbReference type="ChEBI" id="CHEBI:173115"/>
        <dbReference type="EC" id="2.7.7.19"/>
    </reaction>
</comment>
<comment type="cofactor">
    <cofactor evidence="1">
        <name>Mg(2+)</name>
        <dbReference type="ChEBI" id="CHEBI:18420"/>
    </cofactor>
    <cofactor evidence="1">
        <name>Mn(2+)</name>
        <dbReference type="ChEBI" id="CHEBI:29035"/>
    </cofactor>
    <text evidence="1">Binds 2 magnesium ions. Also active with manganese.</text>
</comment>
<comment type="subcellular location">
    <subcellularLocation>
        <location evidence="1">Nucleus</location>
    </subcellularLocation>
</comment>
<comment type="miscellaneous">
    <text>The C.albicans mating-type-like (MTL) locus contains, in addition to the genes for the regulatory proteins (MTLA1, MTLA2, MTLALPHA1 and MTLALPHA2), a and alpha idiomorphs of a phosphatidylinositol kinase (PIKA and PIKALPHA), a poly(A) polymerase (PAPA and PAPALPHA) and an oxysterol binding protein-like protein (OBPA and OBPALPHA).</text>
</comment>
<comment type="similarity">
    <text evidence="3">Belongs to the poly(A) polymerase family.</text>
</comment>
<organism>
    <name type="scientific">Candida albicans (strain SC5314 / ATCC MYA-2876)</name>
    <name type="common">Yeast</name>
    <dbReference type="NCBI Taxonomy" id="237561"/>
    <lineage>
        <taxon>Eukaryota</taxon>
        <taxon>Fungi</taxon>
        <taxon>Dikarya</taxon>
        <taxon>Ascomycota</taxon>
        <taxon>Saccharomycotina</taxon>
        <taxon>Pichiomycetes</taxon>
        <taxon>Debaryomycetaceae</taxon>
        <taxon>Candida/Lodderomyces clade</taxon>
        <taxon>Candida</taxon>
    </lineage>
</organism>
<gene>
    <name type="primary">PAPA</name>
    <name type="synonym">PAP99</name>
    <name type="ordered locus">CAALFM_C501780WA</name>
    <name type="ORF">CaO19.3197</name>
</gene>
<evidence type="ECO:0000250" key="1"/>
<evidence type="ECO:0000256" key="2">
    <source>
        <dbReference type="SAM" id="MobiDB-lite"/>
    </source>
</evidence>
<evidence type="ECO:0000305" key="3"/>
<reference key="1">
    <citation type="journal article" date="1999" name="Science">
        <title>Identification of a mating type-like locus in the asexual pathogenic yeast Candida albicans.</title>
        <authorList>
            <person name="Hull C.M."/>
            <person name="Johnson A.D."/>
        </authorList>
    </citation>
    <scope>NUCLEOTIDE SEQUENCE [GENOMIC DNA]</scope>
    <source>
        <strain>SC5314 / ATCC MYA-2876</strain>
    </source>
</reference>
<reference key="2">
    <citation type="submission" date="1998-12" db="EMBL/GenBank/DDBJ databases">
        <title>Candida albicans PAP99 gene, a putative homolog of the C.albicans PAP1 gene.</title>
        <authorList>
            <person name="Nagahashi S."/>
            <person name="Ishii N."/>
            <person name="Aoki Y."/>
            <person name="Arisawa M."/>
        </authorList>
    </citation>
    <scope>NUCLEOTIDE SEQUENCE [GENOMIC DNA]</scope>
    <source>
        <strain>ATCC 10259 / CBS 5796 / DSM 5817 / JCM 2078 / NBRC 1060</strain>
    </source>
</reference>
<reference key="3">
    <citation type="journal article" date="2004" name="Proc. Natl. Acad. Sci. U.S.A.">
        <title>The diploid genome sequence of Candida albicans.</title>
        <authorList>
            <person name="Jones T."/>
            <person name="Federspiel N.A."/>
            <person name="Chibana H."/>
            <person name="Dungan J."/>
            <person name="Kalman S."/>
            <person name="Magee B.B."/>
            <person name="Newport G."/>
            <person name="Thorstenson Y.R."/>
            <person name="Agabian N."/>
            <person name="Magee P.T."/>
            <person name="Davis R.W."/>
            <person name="Scherer S."/>
        </authorList>
    </citation>
    <scope>NUCLEOTIDE SEQUENCE [LARGE SCALE GENOMIC DNA]</scope>
    <source>
        <strain>SC5314 / ATCC MYA-2876</strain>
    </source>
</reference>
<reference key="4">
    <citation type="journal article" date="2007" name="Genome Biol.">
        <title>Assembly of the Candida albicans genome into sixteen supercontigs aligned on the eight chromosomes.</title>
        <authorList>
            <person name="van het Hoog M."/>
            <person name="Rast T.J."/>
            <person name="Martchenko M."/>
            <person name="Grindle S."/>
            <person name="Dignard D."/>
            <person name="Hogues H."/>
            <person name="Cuomo C."/>
            <person name="Berriman M."/>
            <person name="Scherer S."/>
            <person name="Magee B.B."/>
            <person name="Whiteway M."/>
            <person name="Chibana H."/>
            <person name="Nantel A."/>
            <person name="Magee P.T."/>
        </authorList>
    </citation>
    <scope>GENOME REANNOTATION</scope>
    <source>
        <strain>SC5314 / ATCC MYA-2876</strain>
    </source>
</reference>
<reference key="5">
    <citation type="journal article" date="2013" name="Genome Biol.">
        <title>Assembly of a phased diploid Candida albicans genome facilitates allele-specific measurements and provides a simple model for repeat and indel structure.</title>
        <authorList>
            <person name="Muzzey D."/>
            <person name="Schwartz K."/>
            <person name="Weissman J.S."/>
            <person name="Sherlock G."/>
        </authorList>
    </citation>
    <scope>NUCLEOTIDE SEQUENCE [LARGE SCALE GENOMIC DNA]</scope>
    <scope>GENOME REANNOTATION</scope>
    <source>
        <strain>SC5314 / ATCC MYA-2876</strain>
    </source>
</reference>
<feature type="chain" id="PRO_0000051619" description="Poly(A) polymerase PAPa">
    <location>
        <begin position="1"/>
        <end position="555"/>
    </location>
</feature>
<feature type="region of interest" description="Disordered" evidence="2">
    <location>
        <begin position="1"/>
        <end position="20"/>
    </location>
</feature>
<feature type="region of interest" description="Disordered" evidence="2">
    <location>
        <begin position="532"/>
        <end position="555"/>
    </location>
</feature>
<feature type="binding site" evidence="1">
    <location>
        <begin position="86"/>
        <end position="88"/>
    </location>
    <ligand>
        <name>ATP</name>
        <dbReference type="ChEBI" id="CHEBI:30616"/>
    </ligand>
</feature>
<feature type="binding site" evidence="1">
    <location>
        <begin position="99"/>
        <end position="101"/>
    </location>
    <ligand>
        <name>ATP</name>
        <dbReference type="ChEBI" id="CHEBI:30616"/>
    </ligand>
</feature>
<feature type="binding site" evidence="1">
    <location>
        <position position="99"/>
    </location>
    <ligand>
        <name>Mg(2+)</name>
        <dbReference type="ChEBI" id="CHEBI:18420"/>
        <label>1</label>
        <note>catalytic</note>
    </ligand>
</feature>
<feature type="binding site" evidence="1">
    <location>
        <position position="99"/>
    </location>
    <ligand>
        <name>Mg(2+)</name>
        <dbReference type="ChEBI" id="CHEBI:18420"/>
        <label>2</label>
        <note>catalytic</note>
    </ligand>
</feature>
<feature type="binding site" evidence="1">
    <location>
        <position position="101"/>
    </location>
    <ligand>
        <name>Mg(2+)</name>
        <dbReference type="ChEBI" id="CHEBI:18420"/>
        <label>1</label>
        <note>catalytic</note>
    </ligand>
</feature>
<feature type="binding site" evidence="1">
    <location>
        <position position="101"/>
    </location>
    <ligand>
        <name>Mg(2+)</name>
        <dbReference type="ChEBI" id="CHEBI:18420"/>
        <label>2</label>
        <note>catalytic</note>
    </ligand>
</feature>
<feature type="binding site" evidence="1">
    <location>
        <position position="153"/>
    </location>
    <ligand>
        <name>ATP</name>
        <dbReference type="ChEBI" id="CHEBI:30616"/>
    </ligand>
</feature>
<feature type="binding site" evidence="1">
    <location>
        <position position="153"/>
    </location>
    <ligand>
        <name>Mg(2+)</name>
        <dbReference type="ChEBI" id="CHEBI:18420"/>
        <label>2</label>
        <note>catalytic</note>
    </ligand>
</feature>
<feature type="binding site" evidence="1">
    <location>
        <position position="214"/>
    </location>
    <ligand>
        <name>ATP</name>
        <dbReference type="ChEBI" id="CHEBI:30616"/>
    </ligand>
</feature>
<feature type="binding site" evidence="1">
    <location>
        <position position="223"/>
    </location>
    <ligand>
        <name>ATP</name>
        <dbReference type="ChEBI" id="CHEBI:30616"/>
    </ligand>
</feature>
<feature type="binding site" evidence="1">
    <location>
        <begin position="232"/>
        <end position="233"/>
    </location>
    <ligand>
        <name>ATP</name>
        <dbReference type="ChEBI" id="CHEBI:30616"/>
    </ligand>
</feature>
<feature type="site" description="Interaction with RNA" evidence="1">
    <location>
        <position position="139"/>
    </location>
</feature>
<feature type="site" description="Interaction with RNA" evidence="1">
    <location>
        <position position="144"/>
    </location>
</feature>
<feature type="site" description="Interaction with RNA" evidence="1">
    <location>
        <position position="313"/>
    </location>
</feature>
<feature type="site" description="Interaction with RNA" evidence="1">
    <location>
        <position position="314"/>
    </location>
</feature>
<feature type="site" description="Interaction with RNA" evidence="1">
    <location>
        <position position="386"/>
    </location>
</feature>
<feature type="site" description="Interaction with RNA" evidence="1">
    <location>
        <position position="391"/>
    </location>
</feature>
<feature type="site" description="Interaction with RNA" evidence="1">
    <location>
        <position position="487"/>
    </location>
</feature>
<feature type="sequence conflict" description="In Ref. 2; BAA36217." evidence="3" ref="2">
    <original>N</original>
    <variation>K</variation>
    <location>
        <position position="447"/>
    </location>
</feature>
<feature type="sequence conflict" description="In Ref. 2; BAA36217." evidence="3" ref="2">
    <original>Q</original>
    <variation>R</variation>
    <location>
        <position position="506"/>
    </location>
</feature>
<protein>
    <recommendedName>
        <fullName>Poly(A) polymerase PAPa</fullName>
        <ecNumber>2.7.7.19</ecNumber>
    </recommendedName>
    <alternativeName>
        <fullName>Polynucleotide adenylyltransferase a</fullName>
    </alternativeName>
</protein>
<dbReference type="EC" id="2.7.7.19"/>
<dbReference type="EMBL" id="AF167162">
    <property type="protein sequence ID" value="AAD51407.1"/>
    <property type="molecule type" value="Genomic_DNA"/>
</dbReference>
<dbReference type="EMBL" id="AB021667">
    <property type="protein sequence ID" value="BAA36217.1"/>
    <property type="molecule type" value="Genomic_DNA"/>
</dbReference>
<dbReference type="EMBL" id="CP017627">
    <property type="protein sequence ID" value="AOW29609.1"/>
    <property type="molecule type" value="Genomic_DNA"/>
</dbReference>
<dbReference type="SMR" id="Q9UW26"/>
<dbReference type="FunCoup" id="Q9UW26">
    <property type="interactions" value="1040"/>
</dbReference>
<dbReference type="STRING" id="237561.Q9UW26"/>
<dbReference type="EnsemblFungi" id="C5_01780W_A-T">
    <property type="protein sequence ID" value="C5_01780W_A-T-p1"/>
    <property type="gene ID" value="C5_01780W_A"/>
</dbReference>
<dbReference type="KEGG" id="cal:CAALFM_C501780WA"/>
<dbReference type="CGD" id="CAL0000194576">
    <property type="gene designation" value="PAP1"/>
</dbReference>
<dbReference type="VEuPathDB" id="FungiDB:C5_01780W_A"/>
<dbReference type="HOGENOM" id="CLU_011511_4_1_1"/>
<dbReference type="InParanoid" id="Q9UW26"/>
<dbReference type="OrthoDB" id="412748at2759"/>
<dbReference type="Proteomes" id="UP000000559">
    <property type="component" value="Chromosome 5"/>
</dbReference>
<dbReference type="GO" id="GO:0071920">
    <property type="term" value="C:cleavage body"/>
    <property type="evidence" value="ECO:0007669"/>
    <property type="project" value="EnsemblFungi"/>
</dbReference>
<dbReference type="GO" id="GO:0005829">
    <property type="term" value="C:cytosol"/>
    <property type="evidence" value="ECO:0007669"/>
    <property type="project" value="EnsemblFungi"/>
</dbReference>
<dbReference type="GO" id="GO:0033620">
    <property type="term" value="C:Mei2 nuclear dot complex"/>
    <property type="evidence" value="ECO:0007669"/>
    <property type="project" value="EnsemblFungi"/>
</dbReference>
<dbReference type="GO" id="GO:0005847">
    <property type="term" value="C:mRNA cleavage and polyadenylation specificity factor complex"/>
    <property type="evidence" value="ECO:0007669"/>
    <property type="project" value="EnsemblFungi"/>
</dbReference>
<dbReference type="GO" id="GO:1990251">
    <property type="term" value="C:nuclear exosome focus"/>
    <property type="evidence" value="ECO:0007669"/>
    <property type="project" value="EnsemblFungi"/>
</dbReference>
<dbReference type="GO" id="GO:0005634">
    <property type="term" value="C:nucleus"/>
    <property type="evidence" value="ECO:0000318"/>
    <property type="project" value="GO_Central"/>
</dbReference>
<dbReference type="GO" id="GO:0005524">
    <property type="term" value="F:ATP binding"/>
    <property type="evidence" value="ECO:0007669"/>
    <property type="project" value="UniProtKB-KW"/>
</dbReference>
<dbReference type="GO" id="GO:0046872">
    <property type="term" value="F:metal ion binding"/>
    <property type="evidence" value="ECO:0007669"/>
    <property type="project" value="UniProtKB-KW"/>
</dbReference>
<dbReference type="GO" id="GO:1990817">
    <property type="term" value="F:poly(A) RNA polymerase activity"/>
    <property type="evidence" value="ECO:0000314"/>
    <property type="project" value="CGD"/>
</dbReference>
<dbReference type="GO" id="GO:0003723">
    <property type="term" value="F:RNA binding"/>
    <property type="evidence" value="ECO:0000314"/>
    <property type="project" value="CGD"/>
</dbReference>
<dbReference type="GO" id="GO:0180010">
    <property type="term" value="P:co-transcriptional mRNA 3'-end processing, cleavage and polyadenylation pathway"/>
    <property type="evidence" value="ECO:0007669"/>
    <property type="project" value="EnsemblFungi"/>
</dbReference>
<dbReference type="GO" id="GO:0033621">
    <property type="term" value="P:nuclear mRNA surveillance of meiosis-specific transcripts"/>
    <property type="evidence" value="ECO:0007669"/>
    <property type="project" value="EnsemblFungi"/>
</dbReference>
<dbReference type="GO" id="GO:0044011">
    <property type="term" value="P:single-species biofilm formation on inanimate substrate"/>
    <property type="evidence" value="ECO:0000315"/>
    <property type="project" value="CGD"/>
</dbReference>
<dbReference type="CDD" id="cd05402">
    <property type="entry name" value="NT_PAP_TUTase"/>
    <property type="match status" value="1"/>
</dbReference>
<dbReference type="FunFam" id="3.30.70.590:FF:000003">
    <property type="entry name" value="Poly(A) polymerase"/>
    <property type="match status" value="1"/>
</dbReference>
<dbReference type="FunFam" id="3.30.460.10:FF:000002">
    <property type="entry name" value="Poly(A) polymerase alpha, putative"/>
    <property type="match status" value="1"/>
</dbReference>
<dbReference type="FunFam" id="1.10.1410.10:FF:000001">
    <property type="entry name" value="Putative poly(A) polymerase gamma"/>
    <property type="match status" value="1"/>
</dbReference>
<dbReference type="Gene3D" id="1.10.1410.10">
    <property type="match status" value="1"/>
</dbReference>
<dbReference type="Gene3D" id="3.30.460.10">
    <property type="entry name" value="Beta Polymerase, domain 2"/>
    <property type="match status" value="1"/>
</dbReference>
<dbReference type="Gene3D" id="3.30.70.590">
    <property type="entry name" value="Poly(A) polymerase predicted RNA binding domain"/>
    <property type="match status" value="1"/>
</dbReference>
<dbReference type="InterPro" id="IPR043519">
    <property type="entry name" value="NT_sf"/>
</dbReference>
<dbReference type="InterPro" id="IPR011068">
    <property type="entry name" value="NuclTrfase_I-like_C"/>
</dbReference>
<dbReference type="InterPro" id="IPR007012">
    <property type="entry name" value="PolA_pol_cen_dom"/>
</dbReference>
<dbReference type="InterPro" id="IPR048840">
    <property type="entry name" value="PolA_pol_NTPase"/>
</dbReference>
<dbReference type="InterPro" id="IPR007010">
    <property type="entry name" value="PolA_pol_RNA-bd_dom"/>
</dbReference>
<dbReference type="InterPro" id="IPR014492">
    <property type="entry name" value="PolyA_polymerase"/>
</dbReference>
<dbReference type="PANTHER" id="PTHR10682">
    <property type="entry name" value="POLY A POLYMERASE"/>
    <property type="match status" value="1"/>
</dbReference>
<dbReference type="PANTHER" id="PTHR10682:SF10">
    <property type="entry name" value="POLYNUCLEOTIDE ADENYLYLTRANSFERASE"/>
    <property type="match status" value="1"/>
</dbReference>
<dbReference type="Pfam" id="PF04928">
    <property type="entry name" value="PAP_central"/>
    <property type="match status" value="1"/>
</dbReference>
<dbReference type="Pfam" id="PF20750">
    <property type="entry name" value="PAP_NTPase"/>
    <property type="match status" value="1"/>
</dbReference>
<dbReference type="Pfam" id="PF04926">
    <property type="entry name" value="PAP_RNA-bind"/>
    <property type="match status" value="1"/>
</dbReference>
<dbReference type="PIRSF" id="PIRSF018425">
    <property type="entry name" value="PolyA_polymerase"/>
    <property type="match status" value="1"/>
</dbReference>
<dbReference type="SUPFAM" id="SSF81301">
    <property type="entry name" value="Nucleotidyltransferase"/>
    <property type="match status" value="1"/>
</dbReference>
<dbReference type="SUPFAM" id="SSF55003">
    <property type="entry name" value="PAP/Archaeal CCA-adding enzyme, C-terminal domain"/>
    <property type="match status" value="1"/>
</dbReference>
<dbReference type="SUPFAM" id="SSF81631">
    <property type="entry name" value="PAP/OAS1 substrate-binding domain"/>
    <property type="match status" value="1"/>
</dbReference>
<sequence length="555" mass="63289">MNNQAYGVTPPISVANSTPKENELNDSLIKELKSRGSFESETATKKRVEVLNILQSMTEEFVYKVSIKKNISEGMARDVGGKIFTFGSYRLGVYGPGSDIDTLVVVPKHVSRNDFFEVFYELLKGRSELEEIAPVPDAFVPIIKIEFAGISIDLIFARLDIPRVPRDLTLDDKNLLKNIDEKDLRALNGTRVTDEILQLVPKPTVFKHALRCIKMWAQQRAVYGNIFGFPGGVAWAMLVARICQLYPNAVSAVIVEKFFHIYSQWAWPQPVLLKQIEDGPLQVRVWNPRLYALDRQHRMPVITPAYPSMCATHNITSSTQKVILSEFQRGIELMNDINVGKKSWSDLLERHDFFFRYKFYLCIVAATRSTYAEHLKYSGMVESKLRLLVQKLELVEGIELAHPYVKSFENGYYCDNAEEAHEIMNLYGTSKGDDRVKGVLHAENNDNNKENVENKVELHMTKLFIGLKLDLSKEGEKKLDIQYPCAEFFNICKGWQDFDSEKHFIQIKNVKLYDLSDDVYVDGETRPIKIAKRKRAVSKNEGKKKPKSVGTVSAA</sequence>
<keyword id="KW-0067">ATP-binding</keyword>
<keyword id="KW-0460">Magnesium</keyword>
<keyword id="KW-0464">Manganese</keyword>
<keyword id="KW-0479">Metal-binding</keyword>
<keyword id="KW-0507">mRNA processing</keyword>
<keyword id="KW-0547">Nucleotide-binding</keyword>
<keyword id="KW-0539">Nucleus</keyword>
<keyword id="KW-1185">Reference proteome</keyword>
<keyword id="KW-0694">RNA-binding</keyword>
<keyword id="KW-0808">Transferase</keyword>
<accession>Q9UW26</accession>
<accession>A0A1D8PN98</accession>
<accession>O93834</accession>
<accession>Q59YI3</accession>
<proteinExistence type="inferred from homology"/>
<name>PAPA_CANAL</name>